<proteinExistence type="inferred from homology"/>
<protein>
    <recommendedName>
        <fullName evidence="2">Formamidopyrimidine-DNA glycosylase</fullName>
        <shortName evidence="2">Fapy-DNA glycosylase</shortName>
        <ecNumber evidence="2">3.2.2.23</ecNumber>
    </recommendedName>
    <alternativeName>
        <fullName evidence="2">DNA-(apurinic or apyrimidinic site) lyase MutM</fullName>
        <shortName evidence="2">AP lyase MutM</shortName>
        <ecNumber evidence="2">4.2.99.18</ecNumber>
    </alternativeName>
</protein>
<gene>
    <name evidence="2" type="primary">mutM</name>
    <name evidence="2" type="synonym">fpg</name>
    <name type="ordered locus">RHECIAT_CH0000393</name>
</gene>
<sequence>MPELPEVETVKRGLAPAMEGARVARLELRRQDLRFPFPEALADRVSGRTIVGLGRRAKYLLVDLDDGNTLVSHLGMSGSFRIEEGAASAMPGEFHHARTKDEKHDHVVFHLEGQGGPRRVVYNDPRRFGFMDMVRRADLAAHPFFRDLGPEPTGNDLGAAYLAERFRDKAQPLKSALLDQKNIAGLGNIYVCEALWRSHLSPIRAAGTLVTPGGKPKEKLGLLVASIRDVIADAIAAGGSSLRDHIQTDGSLGYFQHSFSVYDREGQACGTPGCGGTVARIVQAGRSTFYCAACQK</sequence>
<evidence type="ECO:0000250" key="1"/>
<evidence type="ECO:0000255" key="2">
    <source>
        <dbReference type="HAMAP-Rule" id="MF_00103"/>
    </source>
</evidence>
<feature type="initiator methionine" description="Removed" evidence="1">
    <location>
        <position position="1"/>
    </location>
</feature>
<feature type="chain" id="PRO_1000094066" description="Formamidopyrimidine-DNA glycosylase">
    <location>
        <begin position="2"/>
        <end position="296"/>
    </location>
</feature>
<feature type="zinc finger region" description="FPG-type" evidence="2">
    <location>
        <begin position="260"/>
        <end position="296"/>
    </location>
</feature>
<feature type="active site" description="Schiff-base intermediate with DNA" evidence="2">
    <location>
        <position position="2"/>
    </location>
</feature>
<feature type="active site" description="Proton donor" evidence="2">
    <location>
        <position position="3"/>
    </location>
</feature>
<feature type="active site" description="Proton donor; for beta-elimination activity" evidence="2">
    <location>
        <position position="58"/>
    </location>
</feature>
<feature type="active site" description="Proton donor; for delta-elimination activity" evidence="2">
    <location>
        <position position="286"/>
    </location>
</feature>
<feature type="binding site" evidence="2">
    <location>
        <position position="104"/>
    </location>
    <ligand>
        <name>DNA</name>
        <dbReference type="ChEBI" id="CHEBI:16991"/>
    </ligand>
</feature>
<feature type="binding site" evidence="2">
    <location>
        <position position="126"/>
    </location>
    <ligand>
        <name>DNA</name>
        <dbReference type="ChEBI" id="CHEBI:16991"/>
    </ligand>
</feature>
<feature type="binding site" evidence="2">
    <location>
        <position position="169"/>
    </location>
    <ligand>
        <name>DNA</name>
        <dbReference type="ChEBI" id="CHEBI:16991"/>
    </ligand>
</feature>
<dbReference type="EC" id="3.2.2.23" evidence="2"/>
<dbReference type="EC" id="4.2.99.18" evidence="2"/>
<dbReference type="EMBL" id="CP001074">
    <property type="protein sequence ID" value="ACE89387.1"/>
    <property type="molecule type" value="Genomic_DNA"/>
</dbReference>
<dbReference type="SMR" id="B3PZ93"/>
<dbReference type="KEGG" id="rec:RHECIAT_CH0000393"/>
<dbReference type="eggNOG" id="COG0266">
    <property type="taxonomic scope" value="Bacteria"/>
</dbReference>
<dbReference type="HOGENOM" id="CLU_038423_1_1_5"/>
<dbReference type="Proteomes" id="UP000008817">
    <property type="component" value="Chromosome"/>
</dbReference>
<dbReference type="GO" id="GO:0034039">
    <property type="term" value="F:8-oxo-7,8-dihydroguanine DNA N-glycosylase activity"/>
    <property type="evidence" value="ECO:0007669"/>
    <property type="project" value="TreeGrafter"/>
</dbReference>
<dbReference type="GO" id="GO:0140078">
    <property type="term" value="F:class I DNA-(apurinic or apyrimidinic site) endonuclease activity"/>
    <property type="evidence" value="ECO:0007669"/>
    <property type="project" value="UniProtKB-EC"/>
</dbReference>
<dbReference type="GO" id="GO:0003684">
    <property type="term" value="F:damaged DNA binding"/>
    <property type="evidence" value="ECO:0007669"/>
    <property type="project" value="InterPro"/>
</dbReference>
<dbReference type="GO" id="GO:0008270">
    <property type="term" value="F:zinc ion binding"/>
    <property type="evidence" value="ECO:0007669"/>
    <property type="project" value="UniProtKB-UniRule"/>
</dbReference>
<dbReference type="GO" id="GO:0006284">
    <property type="term" value="P:base-excision repair"/>
    <property type="evidence" value="ECO:0007669"/>
    <property type="project" value="InterPro"/>
</dbReference>
<dbReference type="CDD" id="cd08966">
    <property type="entry name" value="EcFpg-like_N"/>
    <property type="match status" value="1"/>
</dbReference>
<dbReference type="FunFam" id="1.10.8.50:FF:000003">
    <property type="entry name" value="Formamidopyrimidine-DNA glycosylase"/>
    <property type="match status" value="1"/>
</dbReference>
<dbReference type="Gene3D" id="1.10.8.50">
    <property type="match status" value="1"/>
</dbReference>
<dbReference type="Gene3D" id="3.20.190.10">
    <property type="entry name" value="MutM-like, N-terminal"/>
    <property type="match status" value="1"/>
</dbReference>
<dbReference type="HAMAP" id="MF_00103">
    <property type="entry name" value="Fapy_DNA_glycosyl"/>
    <property type="match status" value="1"/>
</dbReference>
<dbReference type="InterPro" id="IPR015886">
    <property type="entry name" value="DNA_glyclase/AP_lyase_DNA-bd"/>
</dbReference>
<dbReference type="InterPro" id="IPR015887">
    <property type="entry name" value="DNA_glyclase_Znf_dom_DNA_BS"/>
</dbReference>
<dbReference type="InterPro" id="IPR020629">
    <property type="entry name" value="Formamido-pyr_DNA_Glyclase"/>
</dbReference>
<dbReference type="InterPro" id="IPR012319">
    <property type="entry name" value="FPG_cat"/>
</dbReference>
<dbReference type="InterPro" id="IPR035937">
    <property type="entry name" value="MutM-like_N-ter"/>
</dbReference>
<dbReference type="InterPro" id="IPR010979">
    <property type="entry name" value="Ribosomal_uS13-like_H2TH"/>
</dbReference>
<dbReference type="InterPro" id="IPR000214">
    <property type="entry name" value="Znf_DNA_glyclase/AP_lyase"/>
</dbReference>
<dbReference type="InterPro" id="IPR010663">
    <property type="entry name" value="Znf_FPG/IleRS"/>
</dbReference>
<dbReference type="NCBIfam" id="TIGR00577">
    <property type="entry name" value="fpg"/>
    <property type="match status" value="1"/>
</dbReference>
<dbReference type="NCBIfam" id="NF002211">
    <property type="entry name" value="PRK01103.1"/>
    <property type="match status" value="1"/>
</dbReference>
<dbReference type="PANTHER" id="PTHR22993">
    <property type="entry name" value="FORMAMIDOPYRIMIDINE-DNA GLYCOSYLASE"/>
    <property type="match status" value="1"/>
</dbReference>
<dbReference type="PANTHER" id="PTHR22993:SF9">
    <property type="entry name" value="FORMAMIDOPYRIMIDINE-DNA GLYCOSYLASE"/>
    <property type="match status" value="1"/>
</dbReference>
<dbReference type="Pfam" id="PF01149">
    <property type="entry name" value="Fapy_DNA_glyco"/>
    <property type="match status" value="1"/>
</dbReference>
<dbReference type="Pfam" id="PF06831">
    <property type="entry name" value="H2TH"/>
    <property type="match status" value="1"/>
</dbReference>
<dbReference type="Pfam" id="PF06827">
    <property type="entry name" value="zf-FPG_IleRS"/>
    <property type="match status" value="1"/>
</dbReference>
<dbReference type="SMART" id="SM00898">
    <property type="entry name" value="Fapy_DNA_glyco"/>
    <property type="match status" value="1"/>
</dbReference>
<dbReference type="SMART" id="SM01232">
    <property type="entry name" value="H2TH"/>
    <property type="match status" value="1"/>
</dbReference>
<dbReference type="SUPFAM" id="SSF57716">
    <property type="entry name" value="Glucocorticoid receptor-like (DNA-binding domain)"/>
    <property type="match status" value="1"/>
</dbReference>
<dbReference type="SUPFAM" id="SSF81624">
    <property type="entry name" value="N-terminal domain of MutM-like DNA repair proteins"/>
    <property type="match status" value="1"/>
</dbReference>
<dbReference type="SUPFAM" id="SSF46946">
    <property type="entry name" value="S13-like H2TH domain"/>
    <property type="match status" value="1"/>
</dbReference>
<dbReference type="PROSITE" id="PS51068">
    <property type="entry name" value="FPG_CAT"/>
    <property type="match status" value="1"/>
</dbReference>
<dbReference type="PROSITE" id="PS01242">
    <property type="entry name" value="ZF_FPG_1"/>
    <property type="match status" value="1"/>
</dbReference>
<dbReference type="PROSITE" id="PS51066">
    <property type="entry name" value="ZF_FPG_2"/>
    <property type="match status" value="1"/>
</dbReference>
<organism>
    <name type="scientific">Rhizobium etli (strain CIAT 652)</name>
    <dbReference type="NCBI Taxonomy" id="491916"/>
    <lineage>
        <taxon>Bacteria</taxon>
        <taxon>Pseudomonadati</taxon>
        <taxon>Pseudomonadota</taxon>
        <taxon>Alphaproteobacteria</taxon>
        <taxon>Hyphomicrobiales</taxon>
        <taxon>Rhizobiaceae</taxon>
        <taxon>Rhizobium/Agrobacterium group</taxon>
        <taxon>Rhizobium</taxon>
    </lineage>
</organism>
<accession>B3PZ93</accession>
<keyword id="KW-0227">DNA damage</keyword>
<keyword id="KW-0234">DNA repair</keyword>
<keyword id="KW-0238">DNA-binding</keyword>
<keyword id="KW-0326">Glycosidase</keyword>
<keyword id="KW-0378">Hydrolase</keyword>
<keyword id="KW-0456">Lyase</keyword>
<keyword id="KW-0479">Metal-binding</keyword>
<keyword id="KW-0511">Multifunctional enzyme</keyword>
<keyword id="KW-0862">Zinc</keyword>
<keyword id="KW-0863">Zinc-finger</keyword>
<comment type="function">
    <text evidence="2">Involved in base excision repair of DNA damaged by oxidation or by mutagenic agents. Acts as a DNA glycosylase that recognizes and removes damaged bases. Has a preference for oxidized purines, such as 7,8-dihydro-8-oxoguanine (8-oxoG). Has AP (apurinic/apyrimidinic) lyase activity and introduces nicks in the DNA strand. Cleaves the DNA backbone by beta-delta elimination to generate a single-strand break at the site of the removed base with both 3'- and 5'-phosphates.</text>
</comment>
<comment type="catalytic activity">
    <reaction evidence="2">
        <text>Hydrolysis of DNA containing ring-opened 7-methylguanine residues, releasing 2,6-diamino-4-hydroxy-5-(N-methyl)formamidopyrimidine.</text>
        <dbReference type="EC" id="3.2.2.23"/>
    </reaction>
</comment>
<comment type="catalytic activity">
    <reaction evidence="2">
        <text>2'-deoxyribonucleotide-(2'-deoxyribose 5'-phosphate)-2'-deoxyribonucleotide-DNA = a 3'-end 2'-deoxyribonucleotide-(2,3-dehydro-2,3-deoxyribose 5'-phosphate)-DNA + a 5'-end 5'-phospho-2'-deoxyribonucleoside-DNA + H(+)</text>
        <dbReference type="Rhea" id="RHEA:66592"/>
        <dbReference type="Rhea" id="RHEA-COMP:13180"/>
        <dbReference type="Rhea" id="RHEA-COMP:16897"/>
        <dbReference type="Rhea" id="RHEA-COMP:17067"/>
        <dbReference type="ChEBI" id="CHEBI:15378"/>
        <dbReference type="ChEBI" id="CHEBI:136412"/>
        <dbReference type="ChEBI" id="CHEBI:157695"/>
        <dbReference type="ChEBI" id="CHEBI:167181"/>
        <dbReference type="EC" id="4.2.99.18"/>
    </reaction>
</comment>
<comment type="cofactor">
    <cofactor evidence="2">
        <name>Zn(2+)</name>
        <dbReference type="ChEBI" id="CHEBI:29105"/>
    </cofactor>
    <text evidence="2">Binds 1 zinc ion per subunit.</text>
</comment>
<comment type="subunit">
    <text evidence="2">Monomer.</text>
</comment>
<comment type="similarity">
    <text evidence="2">Belongs to the FPG family.</text>
</comment>
<reference key="1">
    <citation type="journal article" date="2010" name="Appl. Environ. Microbiol.">
        <title>Conserved symbiotic plasmid DNA sequences in the multireplicon pangenomic structure of Rhizobium etli.</title>
        <authorList>
            <person name="Gonzalez V."/>
            <person name="Acosta J.L."/>
            <person name="Santamaria R.I."/>
            <person name="Bustos P."/>
            <person name="Fernandez J.L."/>
            <person name="Hernandez Gonzalez I.L."/>
            <person name="Diaz R."/>
            <person name="Flores M."/>
            <person name="Palacios R."/>
            <person name="Mora J."/>
            <person name="Davila G."/>
        </authorList>
    </citation>
    <scope>NUCLEOTIDE SEQUENCE [LARGE SCALE GENOMIC DNA]</scope>
    <source>
        <strain>CIAT 652</strain>
    </source>
</reference>
<name>FPG_RHIE6</name>